<proteinExistence type="inferred from homology"/>
<keyword id="KW-0963">Cytoplasm</keyword>
<keyword id="KW-0378">Hydrolase</keyword>
<keyword id="KW-1185">Reference proteome</keyword>
<sequence>MELSPREKDKLLIFTAALLAERRKARGLKLNYPEAVAFITAAIMEGARDGKTVAELMGYGATLLTRDDVMEGVPEMIPEIQVEATFPDGTKLVTVHQPIP</sequence>
<reference key="1">
    <citation type="submission" date="2006-03" db="EMBL/GenBank/DDBJ databases">
        <title>Complete sequence of Methylobacillus flagellatus KT.</title>
        <authorList>
            <consortium name="US DOE Joint Genome Institute"/>
            <person name="Copeland A."/>
            <person name="Lucas S."/>
            <person name="Lapidus A."/>
            <person name="Barry K."/>
            <person name="Detter J.C."/>
            <person name="Glavina del Rio T."/>
            <person name="Hammon N."/>
            <person name="Israni S."/>
            <person name="Dalin E."/>
            <person name="Tice H."/>
            <person name="Pitluck S."/>
            <person name="Brettin T."/>
            <person name="Bruce D."/>
            <person name="Han C."/>
            <person name="Tapia R."/>
            <person name="Saunders E."/>
            <person name="Gilna P."/>
            <person name="Schmutz J."/>
            <person name="Larimer F."/>
            <person name="Land M."/>
            <person name="Kyrpides N."/>
            <person name="Anderson I."/>
            <person name="Richardson P."/>
        </authorList>
    </citation>
    <scope>NUCLEOTIDE SEQUENCE [LARGE SCALE GENOMIC DNA]</scope>
    <source>
        <strain>ATCC 51484 / DSM 6875 / VKM B-1610 / KT</strain>
    </source>
</reference>
<name>URE3_METFK</name>
<organism>
    <name type="scientific">Methylobacillus flagellatus (strain ATCC 51484 / DSM 6875 / VKM B-1610 / KT)</name>
    <dbReference type="NCBI Taxonomy" id="265072"/>
    <lineage>
        <taxon>Bacteria</taxon>
        <taxon>Pseudomonadati</taxon>
        <taxon>Pseudomonadota</taxon>
        <taxon>Betaproteobacteria</taxon>
        <taxon>Nitrosomonadales</taxon>
        <taxon>Methylophilaceae</taxon>
        <taxon>Methylobacillus</taxon>
    </lineage>
</organism>
<comment type="catalytic activity">
    <reaction evidence="1">
        <text>urea + 2 H2O + H(+) = hydrogencarbonate + 2 NH4(+)</text>
        <dbReference type="Rhea" id="RHEA:20557"/>
        <dbReference type="ChEBI" id="CHEBI:15377"/>
        <dbReference type="ChEBI" id="CHEBI:15378"/>
        <dbReference type="ChEBI" id="CHEBI:16199"/>
        <dbReference type="ChEBI" id="CHEBI:17544"/>
        <dbReference type="ChEBI" id="CHEBI:28938"/>
        <dbReference type="EC" id="3.5.1.5"/>
    </reaction>
</comment>
<comment type="pathway">
    <text evidence="1">Nitrogen metabolism; urea degradation; CO(2) and NH(3) from urea (urease route): step 1/1.</text>
</comment>
<comment type="subunit">
    <text evidence="1">Heterotrimer of UreA (gamma), UreB (beta) and UreC (alpha) subunits. Three heterotrimers associate to form the active enzyme.</text>
</comment>
<comment type="subcellular location">
    <subcellularLocation>
        <location evidence="1">Cytoplasm</location>
    </subcellularLocation>
</comment>
<comment type="similarity">
    <text evidence="1">Belongs to the urease gamma subunit family.</text>
</comment>
<protein>
    <recommendedName>
        <fullName evidence="1">Urease subunit gamma</fullName>
        <ecNumber evidence="1">3.5.1.5</ecNumber>
    </recommendedName>
    <alternativeName>
        <fullName evidence="1">Urea amidohydrolase subunit gamma</fullName>
    </alternativeName>
</protein>
<evidence type="ECO:0000255" key="1">
    <source>
        <dbReference type="HAMAP-Rule" id="MF_00739"/>
    </source>
</evidence>
<dbReference type="EC" id="3.5.1.5" evidence="1"/>
<dbReference type="EMBL" id="CP000284">
    <property type="protein sequence ID" value="ABE50037.1"/>
    <property type="molecule type" value="Genomic_DNA"/>
</dbReference>
<dbReference type="RefSeq" id="WP_011479991.1">
    <property type="nucleotide sequence ID" value="NC_007947.1"/>
</dbReference>
<dbReference type="SMR" id="Q1H0F0"/>
<dbReference type="STRING" id="265072.Mfla_1769"/>
<dbReference type="KEGG" id="mfa:Mfla_1769"/>
<dbReference type="eggNOG" id="COG0831">
    <property type="taxonomic scope" value="Bacteria"/>
</dbReference>
<dbReference type="HOGENOM" id="CLU_145825_1_0_4"/>
<dbReference type="OrthoDB" id="9797217at2"/>
<dbReference type="UniPathway" id="UPA00258">
    <property type="reaction ID" value="UER00370"/>
</dbReference>
<dbReference type="Proteomes" id="UP000002440">
    <property type="component" value="Chromosome"/>
</dbReference>
<dbReference type="GO" id="GO:0005737">
    <property type="term" value="C:cytoplasm"/>
    <property type="evidence" value="ECO:0007669"/>
    <property type="project" value="UniProtKB-SubCell"/>
</dbReference>
<dbReference type="GO" id="GO:0016151">
    <property type="term" value="F:nickel cation binding"/>
    <property type="evidence" value="ECO:0007669"/>
    <property type="project" value="InterPro"/>
</dbReference>
<dbReference type="GO" id="GO:0009039">
    <property type="term" value="F:urease activity"/>
    <property type="evidence" value="ECO:0007669"/>
    <property type="project" value="UniProtKB-UniRule"/>
</dbReference>
<dbReference type="GO" id="GO:0043419">
    <property type="term" value="P:urea catabolic process"/>
    <property type="evidence" value="ECO:0007669"/>
    <property type="project" value="UniProtKB-UniRule"/>
</dbReference>
<dbReference type="CDD" id="cd00390">
    <property type="entry name" value="Urease_gamma"/>
    <property type="match status" value="1"/>
</dbReference>
<dbReference type="Gene3D" id="3.30.280.10">
    <property type="entry name" value="Urease, gamma-like subunit"/>
    <property type="match status" value="1"/>
</dbReference>
<dbReference type="HAMAP" id="MF_00739">
    <property type="entry name" value="Urease_gamma"/>
    <property type="match status" value="1"/>
</dbReference>
<dbReference type="InterPro" id="IPR012010">
    <property type="entry name" value="Urease_gamma"/>
</dbReference>
<dbReference type="InterPro" id="IPR002026">
    <property type="entry name" value="Urease_gamma/gamma-beta_su"/>
</dbReference>
<dbReference type="InterPro" id="IPR036463">
    <property type="entry name" value="Urease_gamma_sf"/>
</dbReference>
<dbReference type="InterPro" id="IPR050069">
    <property type="entry name" value="Urease_subunit"/>
</dbReference>
<dbReference type="NCBIfam" id="NF009712">
    <property type="entry name" value="PRK13241.1"/>
    <property type="match status" value="1"/>
</dbReference>
<dbReference type="NCBIfam" id="TIGR00193">
    <property type="entry name" value="urease_gam"/>
    <property type="match status" value="1"/>
</dbReference>
<dbReference type="PANTHER" id="PTHR33569">
    <property type="entry name" value="UREASE"/>
    <property type="match status" value="1"/>
</dbReference>
<dbReference type="PANTHER" id="PTHR33569:SF1">
    <property type="entry name" value="UREASE"/>
    <property type="match status" value="1"/>
</dbReference>
<dbReference type="Pfam" id="PF00547">
    <property type="entry name" value="Urease_gamma"/>
    <property type="match status" value="1"/>
</dbReference>
<dbReference type="PIRSF" id="PIRSF001223">
    <property type="entry name" value="Urease_gamma"/>
    <property type="match status" value="1"/>
</dbReference>
<dbReference type="SUPFAM" id="SSF54111">
    <property type="entry name" value="Urease, gamma-subunit"/>
    <property type="match status" value="1"/>
</dbReference>
<gene>
    <name evidence="1" type="primary">ureA</name>
    <name type="ordered locus">Mfla_1769</name>
</gene>
<accession>Q1H0F0</accession>
<feature type="chain" id="PRO_1000046335" description="Urease subunit gamma">
    <location>
        <begin position="1"/>
        <end position="100"/>
    </location>
</feature>